<proteinExistence type="inferred from homology"/>
<reference key="1">
    <citation type="journal article" date="1995" name="Mol. Microbiol.">
        <title>The endogenous Bacillus subtilis (natto) plasmids pTA1015 and pTA1040 contain signal peptidase-encoding genes: identification of a new structural module on cryptic plasmids.</title>
        <authorList>
            <person name="Meijer W.J.J."/>
            <person name="de Jong A."/>
            <person name="Bea G."/>
            <person name="Wisman A."/>
            <person name="Tjalsma H."/>
            <person name="Venema G."/>
            <person name="Bron S."/>
            <person name="van Dijl J.M."/>
        </authorList>
    </citation>
    <scope>NUCLEOTIDE SEQUENCE [GENOMIC DNA]</scope>
    <source>
        <strain>IAM 1232</strain>
    </source>
</reference>
<sequence>MFDKEKRKKSNIIDWIKAILIALILVFLVRTFLFEPYIVQGESMKPTLFNSERLFVNKFVKYTGDFKRGDIVVLNGEEKKTHYVKRLIGLPGDTIEMKNDNLFVNGKRFNEEYLKENKKDAHDSDLNLTGDFGPIKVPKDKYFVMGDNRQNSMDSRNGLGLFNKKDIVGVEELVFFPLDRIRHAK</sequence>
<name>LEPQ_BACNA</name>
<dbReference type="EC" id="3.4.21.89"/>
<dbReference type="EMBL" id="U32378">
    <property type="protein sequence ID" value="AAC44409.1"/>
    <property type="molecule type" value="Genomic_DNA"/>
</dbReference>
<dbReference type="PIR" id="I40552">
    <property type="entry name" value="I40552"/>
</dbReference>
<dbReference type="RefSeq" id="NP_053777.1">
    <property type="nucleotide sequence ID" value="NC_001764.1"/>
</dbReference>
<dbReference type="SMR" id="Q57350"/>
<dbReference type="MEROPS" id="S26.007"/>
<dbReference type="GO" id="GO:0005886">
    <property type="term" value="C:plasma membrane"/>
    <property type="evidence" value="ECO:0007669"/>
    <property type="project" value="UniProtKB-SubCell"/>
</dbReference>
<dbReference type="GO" id="GO:0004252">
    <property type="term" value="F:serine-type endopeptidase activity"/>
    <property type="evidence" value="ECO:0007669"/>
    <property type="project" value="UniProtKB-EC"/>
</dbReference>
<dbReference type="GO" id="GO:0006465">
    <property type="term" value="P:signal peptide processing"/>
    <property type="evidence" value="ECO:0007669"/>
    <property type="project" value="InterPro"/>
</dbReference>
<dbReference type="CDD" id="cd06530">
    <property type="entry name" value="S26_SPase_I"/>
    <property type="match status" value="1"/>
</dbReference>
<dbReference type="FunFam" id="2.10.109.10:FF:000008">
    <property type="entry name" value="Signal peptidase I"/>
    <property type="match status" value="1"/>
</dbReference>
<dbReference type="Gene3D" id="2.10.109.10">
    <property type="entry name" value="Umud Fragment, subunit A"/>
    <property type="match status" value="1"/>
</dbReference>
<dbReference type="InterPro" id="IPR036286">
    <property type="entry name" value="LexA/Signal_pep-like_sf"/>
</dbReference>
<dbReference type="InterPro" id="IPR000223">
    <property type="entry name" value="Pept_S26A_signal_pept_1"/>
</dbReference>
<dbReference type="InterPro" id="IPR019758">
    <property type="entry name" value="Pept_S26A_signal_pept_1_CS"/>
</dbReference>
<dbReference type="InterPro" id="IPR019757">
    <property type="entry name" value="Pept_S26A_signal_pept_1_Lys-AS"/>
</dbReference>
<dbReference type="InterPro" id="IPR019756">
    <property type="entry name" value="Pept_S26A_signal_pept_1_Ser-AS"/>
</dbReference>
<dbReference type="InterPro" id="IPR019533">
    <property type="entry name" value="Peptidase_S26"/>
</dbReference>
<dbReference type="NCBIfam" id="TIGR02227">
    <property type="entry name" value="sigpep_I_bact"/>
    <property type="match status" value="1"/>
</dbReference>
<dbReference type="PANTHER" id="PTHR43390:SF1">
    <property type="entry name" value="CHLOROPLAST PROCESSING PEPTIDASE"/>
    <property type="match status" value="1"/>
</dbReference>
<dbReference type="PANTHER" id="PTHR43390">
    <property type="entry name" value="SIGNAL PEPTIDASE I"/>
    <property type="match status" value="1"/>
</dbReference>
<dbReference type="Pfam" id="PF10502">
    <property type="entry name" value="Peptidase_S26"/>
    <property type="match status" value="1"/>
</dbReference>
<dbReference type="PRINTS" id="PR00727">
    <property type="entry name" value="LEADERPTASE"/>
</dbReference>
<dbReference type="SUPFAM" id="SSF51306">
    <property type="entry name" value="LexA/Signal peptidase"/>
    <property type="match status" value="1"/>
</dbReference>
<dbReference type="PROSITE" id="PS00501">
    <property type="entry name" value="SPASE_I_1"/>
    <property type="match status" value="1"/>
</dbReference>
<dbReference type="PROSITE" id="PS00760">
    <property type="entry name" value="SPASE_I_2"/>
    <property type="match status" value="1"/>
</dbReference>
<dbReference type="PROSITE" id="PS00761">
    <property type="entry name" value="SPASE_I_3"/>
    <property type="match status" value="1"/>
</dbReference>
<comment type="catalytic activity">
    <reaction>
        <text>Cleavage of hydrophobic, N-terminal signal or leader sequences from secreted and periplasmic proteins.</text>
        <dbReference type="EC" id="3.4.21.89"/>
    </reaction>
</comment>
<comment type="subcellular location">
    <subcellularLocation>
        <location evidence="3">Cell membrane</location>
        <topology evidence="3">Single-pass type II membrane protein</topology>
    </subcellularLocation>
</comment>
<comment type="similarity">
    <text evidence="3">Belongs to the peptidase S26 family.</text>
</comment>
<keyword id="KW-1003">Cell membrane</keyword>
<keyword id="KW-0378">Hydrolase</keyword>
<keyword id="KW-0472">Membrane</keyword>
<keyword id="KW-0614">Plasmid</keyword>
<keyword id="KW-0645">Protease</keyword>
<keyword id="KW-0812">Transmembrane</keyword>
<keyword id="KW-1133">Transmembrane helix</keyword>
<evidence type="ECO:0000250" key="1"/>
<evidence type="ECO:0000255" key="2"/>
<evidence type="ECO:0000305" key="3"/>
<gene>
    <name type="primary">sipP</name>
    <name type="synonym">sipP40</name>
</gene>
<geneLocation type="plasmid">
    <name>pTA1040</name>
</geneLocation>
<accession>Q57350</accession>
<feature type="chain" id="PRO_0000109498" description="Signal peptidase I P">
    <location>
        <begin position="1"/>
        <end position="185"/>
    </location>
</feature>
<feature type="topological domain" description="Cytoplasmic" evidence="2">
    <location>
        <begin position="1"/>
        <end position="14"/>
    </location>
</feature>
<feature type="transmembrane region" description="Helical" evidence="2">
    <location>
        <begin position="15"/>
        <end position="34"/>
    </location>
</feature>
<feature type="topological domain" description="Extracellular" evidence="2">
    <location>
        <begin position="35"/>
        <end position="185"/>
    </location>
</feature>
<feature type="active site" evidence="1">
    <location>
        <position position="43"/>
    </location>
</feature>
<feature type="active site" evidence="1">
    <location>
        <position position="85"/>
    </location>
</feature>
<protein>
    <recommendedName>
        <fullName>Signal peptidase I P</fullName>
        <shortName>SPase I</shortName>
        <ecNumber>3.4.21.89</ecNumber>
    </recommendedName>
    <alternativeName>
        <fullName>Leader peptidase I</fullName>
    </alternativeName>
</protein>
<organism>
    <name type="scientific">Bacillus subtilis subsp. natto</name>
    <dbReference type="NCBI Taxonomy" id="86029"/>
    <lineage>
        <taxon>Bacteria</taxon>
        <taxon>Bacillati</taxon>
        <taxon>Bacillota</taxon>
        <taxon>Bacilli</taxon>
        <taxon>Bacillales</taxon>
        <taxon>Bacillaceae</taxon>
        <taxon>Bacillus</taxon>
    </lineage>
</organism>